<feature type="chain" id="PRO_0000342268" description="Transmembrane protein 170B">
    <location>
        <begin position="1"/>
        <end position="132"/>
    </location>
</feature>
<feature type="topological domain" description="Extracellular" evidence="2">
    <location>
        <begin position="1"/>
        <end position="37"/>
    </location>
</feature>
<feature type="transmembrane region" description="Helical" evidence="2">
    <location>
        <begin position="38"/>
        <end position="58"/>
    </location>
</feature>
<feature type="topological domain" description="Cytoplasmic" evidence="2">
    <location>
        <begin position="59"/>
        <end position="68"/>
    </location>
</feature>
<feature type="transmembrane region" description="Helical" evidence="2">
    <location>
        <begin position="69"/>
        <end position="89"/>
    </location>
</feature>
<feature type="topological domain" description="Extracellular" evidence="2">
    <location>
        <begin position="90"/>
        <end position="104"/>
    </location>
</feature>
<feature type="transmembrane region" description="Helical" evidence="2">
    <location>
        <begin position="105"/>
        <end position="125"/>
    </location>
</feature>
<feature type="topological domain" description="Cytoplasmic" evidence="2">
    <location>
        <begin position="126"/>
        <end position="132"/>
    </location>
</feature>
<feature type="glycosylation site" description="N-linked (GlcNAc...) asparagine" evidence="2">
    <location>
        <position position="12"/>
    </location>
</feature>
<proteinExistence type="evidence at transcript level"/>
<organism>
    <name type="scientific">Rattus norvegicus</name>
    <name type="common">Rat</name>
    <dbReference type="NCBI Taxonomy" id="10116"/>
    <lineage>
        <taxon>Eukaryota</taxon>
        <taxon>Metazoa</taxon>
        <taxon>Chordata</taxon>
        <taxon>Craniata</taxon>
        <taxon>Vertebrata</taxon>
        <taxon>Euteleostomi</taxon>
        <taxon>Mammalia</taxon>
        <taxon>Eutheria</taxon>
        <taxon>Euarchontoglires</taxon>
        <taxon>Glires</taxon>
        <taxon>Rodentia</taxon>
        <taxon>Myomorpha</taxon>
        <taxon>Muroidea</taxon>
        <taxon>Muridae</taxon>
        <taxon>Murinae</taxon>
        <taxon>Rattus</taxon>
    </lineage>
</organism>
<name>T170B_RAT</name>
<protein>
    <recommendedName>
        <fullName>Transmembrane protein 170B</fullName>
    </recommendedName>
    <alternativeName>
        <fullName>Liver regeneration-related protein LRRG102</fullName>
    </alternativeName>
</protein>
<accession>Q7TQ79</accession>
<gene>
    <name type="primary">Tmem170b</name>
    <name type="ORF">Ac1258</name>
</gene>
<keyword id="KW-1003">Cell membrane</keyword>
<keyword id="KW-0325">Glycoprotein</keyword>
<keyword id="KW-0472">Membrane</keyword>
<keyword id="KW-1185">Reference proteome</keyword>
<keyword id="KW-0812">Transmembrane</keyword>
<keyword id="KW-1133">Transmembrane helix</keyword>
<evidence type="ECO:0000250" key="1">
    <source>
        <dbReference type="UniProtKB" id="Q5T4T1"/>
    </source>
</evidence>
<evidence type="ECO:0000255" key="2"/>
<evidence type="ECO:0000305" key="3"/>
<dbReference type="EMBL" id="AABR03104926">
    <property type="status" value="NOT_ANNOTATED_CDS"/>
    <property type="molecule type" value="Genomic_DNA"/>
</dbReference>
<dbReference type="EMBL" id="AABR03105894">
    <property type="status" value="NOT_ANNOTATED_CDS"/>
    <property type="molecule type" value="Genomic_DNA"/>
</dbReference>
<dbReference type="EMBL" id="CV114787">
    <property type="status" value="NOT_ANNOTATED_CDS"/>
    <property type="molecule type" value="mRNA"/>
</dbReference>
<dbReference type="EMBL" id="AY310151">
    <property type="protein sequence ID" value="AAP78759.1"/>
    <property type="status" value="ALT_SEQ"/>
    <property type="molecule type" value="mRNA"/>
</dbReference>
<dbReference type="RefSeq" id="NP_001008774.2">
    <property type="nucleotide sequence ID" value="NM_001008774.2"/>
</dbReference>
<dbReference type="SMR" id="Q7TQ79"/>
<dbReference type="FunCoup" id="Q7TQ79">
    <property type="interactions" value="272"/>
</dbReference>
<dbReference type="STRING" id="10116.ENSRNOP00000047176"/>
<dbReference type="GlyCosmos" id="Q7TQ79">
    <property type="glycosylation" value="1 site, No reported glycans"/>
</dbReference>
<dbReference type="GlyGen" id="Q7TQ79">
    <property type="glycosylation" value="1 site"/>
</dbReference>
<dbReference type="PhosphoSitePlus" id="Q7TQ79"/>
<dbReference type="PaxDb" id="10116-ENSRNOP00000047176"/>
<dbReference type="Ensembl" id="ENSRNOT00000046157.5">
    <property type="protein sequence ID" value="ENSRNOP00000047176.3"/>
    <property type="gene ID" value="ENSRNOG00000031495.5"/>
</dbReference>
<dbReference type="GeneID" id="361230"/>
<dbReference type="KEGG" id="rno:361230"/>
<dbReference type="UCSC" id="RGD:1561506">
    <property type="organism name" value="rat"/>
</dbReference>
<dbReference type="AGR" id="RGD:1561506"/>
<dbReference type="CTD" id="100113407"/>
<dbReference type="RGD" id="1561506">
    <property type="gene designation" value="Tmem170b"/>
</dbReference>
<dbReference type="eggNOG" id="KOG4349">
    <property type="taxonomic scope" value="Eukaryota"/>
</dbReference>
<dbReference type="GeneTree" id="ENSGT00940000160424"/>
<dbReference type="HOGENOM" id="CLU_149050_0_0_1"/>
<dbReference type="InParanoid" id="Q7TQ79"/>
<dbReference type="OMA" id="DHMINLS"/>
<dbReference type="OrthoDB" id="13807at2759"/>
<dbReference type="PhylomeDB" id="Q7TQ79"/>
<dbReference type="TreeFam" id="TF314615"/>
<dbReference type="PRO" id="PR:Q7TQ79"/>
<dbReference type="Proteomes" id="UP000002494">
    <property type="component" value="Chromosome 17"/>
</dbReference>
<dbReference type="Bgee" id="ENSRNOG00000031495">
    <property type="expression patterns" value="Expressed in frontal cortex and 18 other cell types or tissues"/>
</dbReference>
<dbReference type="GO" id="GO:0005886">
    <property type="term" value="C:plasma membrane"/>
    <property type="evidence" value="ECO:0000250"/>
    <property type="project" value="UniProtKB"/>
</dbReference>
<dbReference type="GO" id="GO:0090090">
    <property type="term" value="P:negative regulation of canonical Wnt signaling pathway"/>
    <property type="evidence" value="ECO:0000250"/>
    <property type="project" value="UniProtKB"/>
</dbReference>
<dbReference type="InterPro" id="IPR019334">
    <property type="entry name" value="Transmembrane_pr_170"/>
</dbReference>
<dbReference type="PANTHER" id="PTHR22779">
    <property type="entry name" value="SD17342P"/>
    <property type="match status" value="1"/>
</dbReference>
<dbReference type="PANTHER" id="PTHR22779:SF4">
    <property type="entry name" value="TRANSMEMBRANE PROTEIN 170B"/>
    <property type="match status" value="1"/>
</dbReference>
<dbReference type="Pfam" id="PF10190">
    <property type="entry name" value="Tmemb_170"/>
    <property type="match status" value="1"/>
</dbReference>
<sequence length="132" mass="14416">MRAEGADHSMINLSVQQVLSLWAHGTVLRNLTEMWYWIFLWALFSSLFVHGAAGVLMFVMLQRHRQGRVLSIIAVSIGFLASVTGAMITSAAVAGIYRVAGKNMAPLEALVWGVGQTVLTLIISFSRILATL</sequence>
<comment type="subunit">
    <text evidence="1">Interacts with CTNNB1.</text>
</comment>
<comment type="subcellular location">
    <subcellularLocation>
        <location evidence="1">Cell membrane</location>
        <topology evidence="2">Multi-pass membrane protein</topology>
    </subcellularLocation>
</comment>
<comment type="similarity">
    <text evidence="3">Belongs to the TMEM170 family.</text>
</comment>
<comment type="sequence caution" evidence="3">
    <conflict type="miscellaneous discrepancy">
        <sequence resource="EMBL-CDS" id="AAP78759"/>
    </conflict>
</comment>
<reference key="1">
    <citation type="journal article" date="2004" name="Nature">
        <title>Genome sequence of the Brown Norway rat yields insights into mammalian evolution.</title>
        <authorList>
            <person name="Gibbs R.A."/>
            <person name="Weinstock G.M."/>
            <person name="Metzker M.L."/>
            <person name="Muzny D.M."/>
            <person name="Sodergren E.J."/>
            <person name="Scherer S."/>
            <person name="Scott G."/>
            <person name="Steffen D."/>
            <person name="Worley K.C."/>
            <person name="Burch P.E."/>
            <person name="Okwuonu G."/>
            <person name="Hines S."/>
            <person name="Lewis L."/>
            <person name="Deramo C."/>
            <person name="Delgado O."/>
            <person name="Dugan-Rocha S."/>
            <person name="Miner G."/>
            <person name="Morgan M."/>
            <person name="Hawes A."/>
            <person name="Gill R."/>
            <person name="Holt R.A."/>
            <person name="Adams M.D."/>
            <person name="Amanatides P.G."/>
            <person name="Baden-Tillson H."/>
            <person name="Barnstead M."/>
            <person name="Chin S."/>
            <person name="Evans C.A."/>
            <person name="Ferriera S."/>
            <person name="Fosler C."/>
            <person name="Glodek A."/>
            <person name="Gu Z."/>
            <person name="Jennings D."/>
            <person name="Kraft C.L."/>
            <person name="Nguyen T."/>
            <person name="Pfannkoch C.M."/>
            <person name="Sitter C."/>
            <person name="Sutton G.G."/>
            <person name="Venter J.C."/>
            <person name="Woodage T."/>
            <person name="Smith D."/>
            <person name="Lee H.-M."/>
            <person name="Gustafson E."/>
            <person name="Cahill P."/>
            <person name="Kana A."/>
            <person name="Doucette-Stamm L."/>
            <person name="Weinstock K."/>
            <person name="Fechtel K."/>
            <person name="Weiss R.B."/>
            <person name="Dunn D.M."/>
            <person name="Green E.D."/>
            <person name="Blakesley R.W."/>
            <person name="Bouffard G.G."/>
            <person name="De Jong P.J."/>
            <person name="Osoegawa K."/>
            <person name="Zhu B."/>
            <person name="Marra M."/>
            <person name="Schein J."/>
            <person name="Bosdet I."/>
            <person name="Fjell C."/>
            <person name="Jones S."/>
            <person name="Krzywinski M."/>
            <person name="Mathewson C."/>
            <person name="Siddiqui A."/>
            <person name="Wye N."/>
            <person name="McPherson J."/>
            <person name="Zhao S."/>
            <person name="Fraser C.M."/>
            <person name="Shetty J."/>
            <person name="Shatsman S."/>
            <person name="Geer K."/>
            <person name="Chen Y."/>
            <person name="Abramzon S."/>
            <person name="Nierman W.C."/>
            <person name="Havlak P.H."/>
            <person name="Chen R."/>
            <person name="Durbin K.J."/>
            <person name="Egan A."/>
            <person name="Ren Y."/>
            <person name="Song X.-Z."/>
            <person name="Li B."/>
            <person name="Liu Y."/>
            <person name="Qin X."/>
            <person name="Cawley S."/>
            <person name="Cooney A.J."/>
            <person name="D'Souza L.M."/>
            <person name="Martin K."/>
            <person name="Wu J.Q."/>
            <person name="Gonzalez-Garay M.L."/>
            <person name="Jackson A.R."/>
            <person name="Kalafus K.J."/>
            <person name="McLeod M.P."/>
            <person name="Milosavljevic A."/>
            <person name="Virk D."/>
            <person name="Volkov A."/>
            <person name="Wheeler D.A."/>
            <person name="Zhang Z."/>
            <person name="Bailey J.A."/>
            <person name="Eichler E.E."/>
            <person name="Tuzun E."/>
            <person name="Birney E."/>
            <person name="Mongin E."/>
            <person name="Ureta-Vidal A."/>
            <person name="Woodwark C."/>
            <person name="Zdobnov E."/>
            <person name="Bork P."/>
            <person name="Suyama M."/>
            <person name="Torrents D."/>
            <person name="Alexandersson M."/>
            <person name="Trask B.J."/>
            <person name="Young J.M."/>
            <person name="Huang H."/>
            <person name="Wang H."/>
            <person name="Xing H."/>
            <person name="Daniels S."/>
            <person name="Gietzen D."/>
            <person name="Schmidt J."/>
            <person name="Stevens K."/>
            <person name="Vitt U."/>
            <person name="Wingrove J."/>
            <person name="Camara F."/>
            <person name="Mar Alba M."/>
            <person name="Abril J.F."/>
            <person name="Guigo R."/>
            <person name="Smit A."/>
            <person name="Dubchak I."/>
            <person name="Rubin E.M."/>
            <person name="Couronne O."/>
            <person name="Poliakov A."/>
            <person name="Huebner N."/>
            <person name="Ganten D."/>
            <person name="Goesele C."/>
            <person name="Hummel O."/>
            <person name="Kreitler T."/>
            <person name="Lee Y.-A."/>
            <person name="Monti J."/>
            <person name="Schulz H."/>
            <person name="Zimdahl H."/>
            <person name="Himmelbauer H."/>
            <person name="Lehrach H."/>
            <person name="Jacob H.J."/>
            <person name="Bromberg S."/>
            <person name="Gullings-Handley J."/>
            <person name="Jensen-Seaman M.I."/>
            <person name="Kwitek A.E."/>
            <person name="Lazar J."/>
            <person name="Pasko D."/>
            <person name="Tonellato P.J."/>
            <person name="Twigger S."/>
            <person name="Ponting C.P."/>
            <person name="Duarte J.M."/>
            <person name="Rice S."/>
            <person name="Goodstadt L."/>
            <person name="Beatson S.A."/>
            <person name="Emes R.D."/>
            <person name="Winter E.E."/>
            <person name="Webber C."/>
            <person name="Brandt P."/>
            <person name="Nyakatura G."/>
            <person name="Adetobi M."/>
            <person name="Chiaromonte F."/>
            <person name="Elnitski L."/>
            <person name="Eswara P."/>
            <person name="Hardison R.C."/>
            <person name="Hou M."/>
            <person name="Kolbe D."/>
            <person name="Makova K."/>
            <person name="Miller W."/>
            <person name="Nekrutenko A."/>
            <person name="Riemer C."/>
            <person name="Schwartz S."/>
            <person name="Taylor J."/>
            <person name="Yang S."/>
            <person name="Zhang Y."/>
            <person name="Lindpaintner K."/>
            <person name="Andrews T.D."/>
            <person name="Caccamo M."/>
            <person name="Clamp M."/>
            <person name="Clarke L."/>
            <person name="Curwen V."/>
            <person name="Durbin R.M."/>
            <person name="Eyras E."/>
            <person name="Searle S.M."/>
            <person name="Cooper G.M."/>
            <person name="Batzoglou S."/>
            <person name="Brudno M."/>
            <person name="Sidow A."/>
            <person name="Stone E.A."/>
            <person name="Payseur B.A."/>
            <person name="Bourque G."/>
            <person name="Lopez-Otin C."/>
            <person name="Puente X.S."/>
            <person name="Chakrabarti K."/>
            <person name="Chatterji S."/>
            <person name="Dewey C."/>
            <person name="Pachter L."/>
            <person name="Bray N."/>
            <person name="Yap V.B."/>
            <person name="Caspi A."/>
            <person name="Tesler G."/>
            <person name="Pevzner P.A."/>
            <person name="Haussler D."/>
            <person name="Roskin K.M."/>
            <person name="Baertsch R."/>
            <person name="Clawson H."/>
            <person name="Furey T.S."/>
            <person name="Hinrichs A.S."/>
            <person name="Karolchik D."/>
            <person name="Kent W.J."/>
            <person name="Rosenbloom K.R."/>
            <person name="Trumbower H."/>
            <person name="Weirauch M."/>
            <person name="Cooper D.N."/>
            <person name="Stenson P.D."/>
            <person name="Ma B."/>
            <person name="Brent M."/>
            <person name="Arumugam M."/>
            <person name="Shteynberg D."/>
            <person name="Copley R.R."/>
            <person name="Taylor M.S."/>
            <person name="Riethman H."/>
            <person name="Mudunuri U."/>
            <person name="Peterson J."/>
            <person name="Guyer M."/>
            <person name="Felsenfeld A."/>
            <person name="Old S."/>
            <person name="Mockrin S."/>
            <person name="Collins F.S."/>
        </authorList>
    </citation>
    <scope>NUCLEOTIDE SEQUENCE [LARGE SCALE GENOMIC DNA]</scope>
    <source>
        <strain>Brown Norway</strain>
    </source>
</reference>
<reference key="2">
    <citation type="journal article" date="2004" name="Genome Res.">
        <title>The status, quality, and expansion of the NIH full-length cDNA project: the Mammalian Gene Collection (MGC).</title>
        <authorList>
            <consortium name="The MGC Project Team"/>
        </authorList>
    </citation>
    <scope>NUCLEOTIDE SEQUENCE [LARGE SCALE MRNA] OF 17-132</scope>
</reference>
<reference key="3">
    <citation type="submission" date="2003-05" db="EMBL/GenBank/DDBJ databases">
        <title>Liver regeneration after PH.</title>
        <authorList>
            <person name="Xu C.S."/>
            <person name="Li W.Q."/>
            <person name="Li Y.C."/>
            <person name="Han H.P."/>
            <person name="Wang G.P."/>
            <person name="Chai L.Q."/>
            <person name="Yuan J.Y."/>
            <person name="Yang K.J."/>
            <person name="Yan H.M."/>
            <person name="Chang C.F."/>
            <person name="Zhao L.F."/>
            <person name="Ma H."/>
            <person name="Wang L."/>
            <person name="Wang S.F."/>
            <person name="Shi J.B."/>
            <person name="Rahman S."/>
            <person name="Wang Q.N."/>
            <person name="Zhang J.B."/>
        </authorList>
    </citation>
    <scope>NUCLEOTIDE SEQUENCE [LARGE SCALE MRNA] OF 33-132</scope>
    <source>
        <strain>Sprague-Dawley</strain>
        <tissue>Liver</tissue>
    </source>
</reference>